<evidence type="ECO:0000255" key="1">
    <source>
        <dbReference type="HAMAP-Rule" id="MF_00651"/>
    </source>
</evidence>
<dbReference type="EC" id="3.1.-.-" evidence="1"/>
<dbReference type="EMBL" id="FM177140">
    <property type="protein sequence ID" value="CAQ65971.1"/>
    <property type="molecule type" value="Genomic_DNA"/>
</dbReference>
<dbReference type="SMR" id="B3WC70"/>
<dbReference type="KEGG" id="lcb:LCABL_08480"/>
<dbReference type="HOGENOM" id="CLU_098240_2_0_9"/>
<dbReference type="GO" id="GO:0005829">
    <property type="term" value="C:cytosol"/>
    <property type="evidence" value="ECO:0007669"/>
    <property type="project" value="TreeGrafter"/>
</dbReference>
<dbReference type="GO" id="GO:0004518">
    <property type="term" value="F:nuclease activity"/>
    <property type="evidence" value="ECO:0007669"/>
    <property type="project" value="UniProtKB-KW"/>
</dbReference>
<dbReference type="GO" id="GO:0000967">
    <property type="term" value="P:rRNA 5'-end processing"/>
    <property type="evidence" value="ECO:0007669"/>
    <property type="project" value="UniProtKB-UniRule"/>
</dbReference>
<dbReference type="CDD" id="cd16964">
    <property type="entry name" value="YqgF"/>
    <property type="match status" value="1"/>
</dbReference>
<dbReference type="FunFam" id="3.30.420.140:FF:000003">
    <property type="entry name" value="Putative pre-16S rRNA nuclease"/>
    <property type="match status" value="1"/>
</dbReference>
<dbReference type="Gene3D" id="3.30.420.140">
    <property type="entry name" value="YqgF/RNase H-like domain"/>
    <property type="match status" value="1"/>
</dbReference>
<dbReference type="HAMAP" id="MF_00651">
    <property type="entry name" value="Nuclease_YqgF"/>
    <property type="match status" value="1"/>
</dbReference>
<dbReference type="InterPro" id="IPR012337">
    <property type="entry name" value="RNaseH-like_sf"/>
</dbReference>
<dbReference type="InterPro" id="IPR005227">
    <property type="entry name" value="YqgF"/>
</dbReference>
<dbReference type="InterPro" id="IPR006641">
    <property type="entry name" value="YqgF/RNaseH-like_dom"/>
</dbReference>
<dbReference type="InterPro" id="IPR037027">
    <property type="entry name" value="YqgF/RNaseH-like_dom_sf"/>
</dbReference>
<dbReference type="NCBIfam" id="TIGR00250">
    <property type="entry name" value="RNAse_H_YqgF"/>
    <property type="match status" value="1"/>
</dbReference>
<dbReference type="PANTHER" id="PTHR33317">
    <property type="entry name" value="POLYNUCLEOTIDYL TRANSFERASE, RIBONUCLEASE H-LIKE SUPERFAMILY PROTEIN"/>
    <property type="match status" value="1"/>
</dbReference>
<dbReference type="PANTHER" id="PTHR33317:SF4">
    <property type="entry name" value="POLYNUCLEOTIDYL TRANSFERASE, RIBONUCLEASE H-LIKE SUPERFAMILY PROTEIN"/>
    <property type="match status" value="1"/>
</dbReference>
<dbReference type="Pfam" id="PF03652">
    <property type="entry name" value="RuvX"/>
    <property type="match status" value="1"/>
</dbReference>
<dbReference type="SMART" id="SM00732">
    <property type="entry name" value="YqgFc"/>
    <property type="match status" value="1"/>
</dbReference>
<dbReference type="SUPFAM" id="SSF53098">
    <property type="entry name" value="Ribonuclease H-like"/>
    <property type="match status" value="1"/>
</dbReference>
<proteinExistence type="inferred from homology"/>
<accession>B3WC70</accession>
<organism>
    <name type="scientific">Lacticaseibacillus casei (strain BL23)</name>
    <name type="common">Lactobacillus casei</name>
    <dbReference type="NCBI Taxonomy" id="543734"/>
    <lineage>
        <taxon>Bacteria</taxon>
        <taxon>Bacillati</taxon>
        <taxon>Bacillota</taxon>
        <taxon>Bacilli</taxon>
        <taxon>Lactobacillales</taxon>
        <taxon>Lactobacillaceae</taxon>
        <taxon>Lacticaseibacillus</taxon>
    </lineage>
</organism>
<name>YQGF_LACCB</name>
<reference key="1">
    <citation type="submission" date="2008-06" db="EMBL/GenBank/DDBJ databases">
        <title>Lactobacillus casei BL23 complete genome sequence.</title>
        <authorList>
            <person name="Maze A."/>
            <person name="Boel G."/>
            <person name="Bourand A."/>
            <person name="Loux V."/>
            <person name="Gibrat J.F."/>
            <person name="Zuniga M."/>
            <person name="Hartke A."/>
            <person name="Deutscher J."/>
        </authorList>
    </citation>
    <scope>NUCLEOTIDE SEQUENCE [LARGE SCALE GENOMIC DNA]</scope>
    <source>
        <strain>BL23</strain>
    </source>
</reference>
<protein>
    <recommendedName>
        <fullName evidence="1">Putative pre-16S rRNA nuclease</fullName>
        <ecNumber evidence="1">3.1.-.-</ecNumber>
    </recommendedName>
</protein>
<feature type="chain" id="PRO_1000131043" description="Putative pre-16S rRNA nuclease">
    <location>
        <begin position="1"/>
        <end position="144"/>
    </location>
</feature>
<gene>
    <name type="ordered locus">LCABL_08480</name>
</gene>
<keyword id="KW-0963">Cytoplasm</keyword>
<keyword id="KW-0378">Hydrolase</keyword>
<keyword id="KW-0540">Nuclease</keyword>
<keyword id="KW-0690">Ribosome biogenesis</keyword>
<comment type="function">
    <text evidence="1">Could be a nuclease involved in processing of the 5'-end of pre-16S rRNA.</text>
</comment>
<comment type="subcellular location">
    <subcellularLocation>
        <location evidence="1">Cytoplasm</location>
    </subcellularLocation>
</comment>
<comment type="similarity">
    <text evidence="1">Belongs to the YqgF nuclease family.</text>
</comment>
<sequence length="144" mass="16050">MRLMGLDVGSRTVGVAVSDPLGWTAQGLEIIRINEDKEQFGIARLKELVKQYEVTAFVLGLPKNMNNSIGPRAEKSQAYGELLKTTFGLPVDFIDERLTTVEASRMLIEEADASRKRQKQVIDKLAAQMILQNYLDAKGPLTKQ</sequence>